<reference key="1">
    <citation type="journal article" date="2008" name="Genome Res.">
        <title>Insights from the complete genome sequence of Mycobacterium marinum on the evolution of Mycobacterium tuberculosis.</title>
        <authorList>
            <person name="Stinear T.P."/>
            <person name="Seemann T."/>
            <person name="Harrison P.F."/>
            <person name="Jenkin G.A."/>
            <person name="Davies J.K."/>
            <person name="Johnson P.D."/>
            <person name="Abdellah Z."/>
            <person name="Arrowsmith C."/>
            <person name="Chillingworth T."/>
            <person name="Churcher C."/>
            <person name="Clarke K."/>
            <person name="Cronin A."/>
            <person name="Davis P."/>
            <person name="Goodhead I."/>
            <person name="Holroyd N."/>
            <person name="Jagels K."/>
            <person name="Lord A."/>
            <person name="Moule S."/>
            <person name="Mungall K."/>
            <person name="Norbertczak H."/>
            <person name="Quail M.A."/>
            <person name="Rabbinowitsch E."/>
            <person name="Walker D."/>
            <person name="White B."/>
            <person name="Whitehead S."/>
            <person name="Small P.L."/>
            <person name="Brosch R."/>
            <person name="Ramakrishnan L."/>
            <person name="Fischbach M.A."/>
            <person name="Parkhill J."/>
            <person name="Cole S.T."/>
        </authorList>
    </citation>
    <scope>NUCLEOTIDE SEQUENCE [LARGE SCALE GENOMIC DNA]</scope>
    <source>
        <strain>ATCC BAA-535 / M</strain>
    </source>
</reference>
<keyword id="KW-0489">Methyltransferase</keyword>
<keyword id="KW-1185">Reference proteome</keyword>
<keyword id="KW-0949">S-adenosyl-L-methionine</keyword>
<keyword id="KW-0808">Transferase</keyword>
<organism>
    <name type="scientific">Mycobacterium marinum (strain ATCC BAA-535 / M)</name>
    <dbReference type="NCBI Taxonomy" id="216594"/>
    <lineage>
        <taxon>Bacteria</taxon>
        <taxon>Bacillati</taxon>
        <taxon>Actinomycetota</taxon>
        <taxon>Actinomycetes</taxon>
        <taxon>Mycobacteriales</taxon>
        <taxon>Mycobacteriaceae</taxon>
        <taxon>Mycobacterium</taxon>
        <taxon>Mycobacterium ulcerans group</taxon>
    </lineage>
</organism>
<proteinExistence type="inferred from homology"/>
<dbReference type="EC" id="2.1.1.-"/>
<dbReference type="EMBL" id="CP000854">
    <property type="protein sequence ID" value="ACC38823.1"/>
    <property type="molecule type" value="Genomic_DNA"/>
</dbReference>
<dbReference type="RefSeq" id="WP_012392338.1">
    <property type="nucleotide sequence ID" value="NC_010612.1"/>
</dbReference>
<dbReference type="SMR" id="B2HLS4"/>
<dbReference type="STRING" id="216594.MMAR_0356"/>
<dbReference type="KEGG" id="mmi:MMAR_0356"/>
<dbReference type="eggNOG" id="COG3315">
    <property type="taxonomic scope" value="Bacteria"/>
</dbReference>
<dbReference type="HOGENOM" id="CLU_056160_2_1_11"/>
<dbReference type="OrthoDB" id="9806164at2"/>
<dbReference type="Proteomes" id="UP000001190">
    <property type="component" value="Chromosome"/>
</dbReference>
<dbReference type="GO" id="GO:0008168">
    <property type="term" value="F:methyltransferase activity"/>
    <property type="evidence" value="ECO:0007669"/>
    <property type="project" value="UniProtKB-KW"/>
</dbReference>
<dbReference type="GO" id="GO:0032259">
    <property type="term" value="P:methylation"/>
    <property type="evidence" value="ECO:0007669"/>
    <property type="project" value="UniProtKB-KW"/>
</dbReference>
<dbReference type="Gene3D" id="3.40.50.150">
    <property type="entry name" value="Vaccinia Virus protein VP39"/>
    <property type="match status" value="1"/>
</dbReference>
<dbReference type="InterPro" id="IPR007213">
    <property type="entry name" value="Ppm1/Ppm2/Tcmp"/>
</dbReference>
<dbReference type="InterPro" id="IPR029063">
    <property type="entry name" value="SAM-dependent_MTases_sf"/>
</dbReference>
<dbReference type="InterPro" id="IPR011610">
    <property type="entry name" value="SAM_mthyl_Trfase_ML2640-like"/>
</dbReference>
<dbReference type="NCBIfam" id="TIGR00027">
    <property type="entry name" value="mthyl_TIGR00027"/>
    <property type="match status" value="1"/>
</dbReference>
<dbReference type="PANTHER" id="PTHR43619">
    <property type="entry name" value="S-ADENOSYL-L-METHIONINE-DEPENDENT METHYLTRANSFERASE YKTD-RELATED"/>
    <property type="match status" value="1"/>
</dbReference>
<dbReference type="PANTHER" id="PTHR43619:SF2">
    <property type="entry name" value="S-ADENOSYL-L-METHIONINE-DEPENDENT METHYLTRANSFERASES SUPERFAMILY PROTEIN"/>
    <property type="match status" value="1"/>
</dbReference>
<dbReference type="Pfam" id="PF04072">
    <property type="entry name" value="LCM"/>
    <property type="match status" value="1"/>
</dbReference>
<dbReference type="SUPFAM" id="SSF53335">
    <property type="entry name" value="S-adenosyl-L-methionine-dependent methyltransferases"/>
    <property type="match status" value="1"/>
</dbReference>
<sequence length="310" mass="34218">MTELDEVDSLRSDGDSWTVTESVGATALGVAAARAVETAGANPLIRDEFAPILVSSAGPAWARLADPDIGWLDDDPHGQRLHRLGCDYQAVRTHFFDEYFAAAAGAGIEQAVILAAGLDCRAYRLNWPPEAVVFEIDQPKVLEYKAQILESHGVTAAATRHGVAVDLREDWPAALLRAGFDRDRPTAWLAEGLLPYLPGDAQDRLFEMITDLSAPRSRIAVESFTMNLTGNKQRWNRMRDRLGLDINVEALTYREPGRADAAEWLANHGWQVYSVSNREEMARLGRPVPEDLVDEAITTTLLRASLEISR</sequence>
<comment type="function">
    <text evidence="1">Exhibits S-adenosyl-L-methionine-dependent methyltransferase activity.</text>
</comment>
<comment type="similarity">
    <text evidence="2">Belongs to the UPF0677 family.</text>
</comment>
<feature type="chain" id="PRO_0000361168" description="Putative S-adenosyl-L-methionine-dependent methyltransferase MMAR_0356">
    <location>
        <begin position="1"/>
        <end position="310"/>
    </location>
</feature>
<feature type="binding site" evidence="1">
    <location>
        <position position="137"/>
    </location>
    <ligand>
        <name>S-adenosyl-L-methionine</name>
        <dbReference type="ChEBI" id="CHEBI:59789"/>
    </ligand>
</feature>
<feature type="binding site" evidence="1">
    <location>
        <begin position="166"/>
        <end position="167"/>
    </location>
    <ligand>
        <name>S-adenosyl-L-methionine</name>
        <dbReference type="ChEBI" id="CHEBI:59789"/>
    </ligand>
</feature>
<accession>B2HLS4</accession>
<evidence type="ECO:0000250" key="1"/>
<evidence type="ECO:0000305" key="2"/>
<name>Y356_MYCMM</name>
<protein>
    <recommendedName>
        <fullName>Putative S-adenosyl-L-methionine-dependent methyltransferase MMAR_0356</fullName>
        <ecNumber>2.1.1.-</ecNumber>
    </recommendedName>
</protein>
<gene>
    <name type="ordered locus">MMAR_0356</name>
</gene>